<accession>P82217</accession>
<dbReference type="InParanoid" id="P82217"/>
<dbReference type="Proteomes" id="UP000005204">
    <property type="component" value="Unassembled WGS sequence"/>
</dbReference>
<keyword id="KW-0903">Direct protein sequencing</keyword>
<keyword id="KW-1185">Reference proteome</keyword>
<proteinExistence type="evidence at protein level"/>
<sequence>SEFTNXKSIL</sequence>
<organism>
    <name type="scientific">Bombyx mori</name>
    <name type="common">Silk moth</name>
    <dbReference type="NCBI Taxonomy" id="7091"/>
    <lineage>
        <taxon>Eukaryota</taxon>
        <taxon>Metazoa</taxon>
        <taxon>Ecdysozoa</taxon>
        <taxon>Arthropoda</taxon>
        <taxon>Hexapoda</taxon>
        <taxon>Insecta</taxon>
        <taxon>Pterygota</taxon>
        <taxon>Neoptera</taxon>
        <taxon>Endopterygota</taxon>
        <taxon>Lepidoptera</taxon>
        <taxon>Glossata</taxon>
        <taxon>Ditrysia</taxon>
        <taxon>Bombycoidea</taxon>
        <taxon>Bombycidae</taxon>
        <taxon>Bombycinae</taxon>
        <taxon>Bombyx</taxon>
    </lineage>
</organism>
<feature type="chain" id="PRO_0000274539" description="Unknown protein 19 from 2D-PAGE">
    <location>
        <begin position="1"/>
        <end position="10" status="greater than"/>
    </location>
</feature>
<feature type="non-terminal residue" evidence="2">
    <location>
        <position position="10"/>
    </location>
</feature>
<protein>
    <recommendedName>
        <fullName>Unknown protein 19 from 2D-PAGE</fullName>
    </recommendedName>
</protein>
<name>UP19_BOMMO</name>
<evidence type="ECO:0000269" key="1">
    <source>
    </source>
</evidence>
<evidence type="ECO:0000303" key="2">
    <source>
    </source>
</evidence>
<evidence type="ECO:0000305" key="3"/>
<reference evidence="3" key="1">
    <citation type="journal article" date="2001" name="Yi Chuan Xue Bao">
        <title>Protein database for several tissues derived from five instar of silkworm.</title>
        <authorList>
            <person name="Zhong B.-X."/>
        </authorList>
    </citation>
    <scope>PROTEIN SEQUENCE</scope>
    <source>
        <strain evidence="1">Xinhang X Keming</strain>
        <tissue evidence="1">Body wall</tissue>
        <tissue evidence="1">Fat body</tissue>
    </source>
</reference>